<protein>
    <recommendedName>
        <fullName evidence="1">F420-dependent glucose-6-phosphate dehydrogenase 2</fullName>
        <shortName evidence="1">FGD 2</shortName>
        <shortName evidence="1">G6PD 2</shortName>
        <ecNumber evidence="1">1.1.98.2</ecNumber>
    </recommendedName>
</protein>
<reference key="1">
    <citation type="journal article" date="2006" name="Proc. Natl. Acad. Sci. U.S.A.">
        <title>The complete genome of Rhodococcus sp. RHA1 provides insights into a catabolic powerhouse.</title>
        <authorList>
            <person name="McLeod M.P."/>
            <person name="Warren R.L."/>
            <person name="Hsiao W.W.L."/>
            <person name="Araki N."/>
            <person name="Myhre M."/>
            <person name="Fernandes C."/>
            <person name="Miyazawa D."/>
            <person name="Wong W."/>
            <person name="Lillquist A.L."/>
            <person name="Wang D."/>
            <person name="Dosanjh M."/>
            <person name="Hara H."/>
            <person name="Petrescu A."/>
            <person name="Morin R.D."/>
            <person name="Yang G."/>
            <person name="Stott J.M."/>
            <person name="Schein J.E."/>
            <person name="Shin H."/>
            <person name="Smailus D."/>
            <person name="Siddiqui A.S."/>
            <person name="Marra M.A."/>
            <person name="Jones S.J.M."/>
            <person name="Holt R."/>
            <person name="Brinkman F.S.L."/>
            <person name="Miyauchi K."/>
            <person name="Fukuda M."/>
            <person name="Davies J.E."/>
            <person name="Mohn W.W."/>
            <person name="Eltis L.D."/>
        </authorList>
    </citation>
    <scope>NUCLEOTIDE SEQUENCE [LARGE SCALE GENOMIC DNA]</scope>
    <source>
        <strain>RHA1</strain>
    </source>
</reference>
<name>FGD2_RHOJR</name>
<comment type="function">
    <text evidence="1">Catalyzes the coenzyme F420-dependent oxidation of glucose 6-phosphate (G6P) to 6-phosphogluconolactone.</text>
</comment>
<comment type="catalytic activity">
    <reaction evidence="1">
        <text>oxidized coenzyme F420-(gamma-L-Glu)(n) + D-glucose 6-phosphate + H(+) = 6-phospho-D-glucono-1,5-lactone + reduced coenzyme F420-(gamma-L-Glu)(n)</text>
        <dbReference type="Rhea" id="RHEA:27294"/>
        <dbReference type="Rhea" id="RHEA-COMP:12939"/>
        <dbReference type="Rhea" id="RHEA-COMP:14378"/>
        <dbReference type="ChEBI" id="CHEBI:15378"/>
        <dbReference type="ChEBI" id="CHEBI:57955"/>
        <dbReference type="ChEBI" id="CHEBI:61548"/>
        <dbReference type="ChEBI" id="CHEBI:133980"/>
        <dbReference type="ChEBI" id="CHEBI:139511"/>
        <dbReference type="EC" id="1.1.98.2"/>
    </reaction>
</comment>
<comment type="subunit">
    <text evidence="1">Homodimer.</text>
</comment>
<comment type="similarity">
    <text evidence="1">Belongs to the F420-dependent glucose-6-phosphate dehydrogenase family.</text>
</comment>
<dbReference type="EC" id="1.1.98.2" evidence="1"/>
<dbReference type="EMBL" id="CP000434">
    <property type="protein sequence ID" value="ABH00813.1"/>
    <property type="molecule type" value="Genomic_DNA"/>
</dbReference>
<dbReference type="RefSeq" id="WP_011600440.1">
    <property type="nucleotide sequence ID" value="NC_008271.1"/>
</dbReference>
<dbReference type="SMR" id="Q0RV73"/>
<dbReference type="KEGG" id="rha:RHA1_ro11166"/>
<dbReference type="PATRIC" id="fig|101510.16.peg.8986"/>
<dbReference type="eggNOG" id="COG2141">
    <property type="taxonomic scope" value="Bacteria"/>
</dbReference>
<dbReference type="HOGENOM" id="CLU_027853_4_0_11"/>
<dbReference type="OrthoDB" id="180193at2"/>
<dbReference type="Proteomes" id="UP000008710">
    <property type="component" value="Plasmid pRHL3"/>
</dbReference>
<dbReference type="GO" id="GO:0070967">
    <property type="term" value="F:coenzyme F420 binding"/>
    <property type="evidence" value="ECO:0007669"/>
    <property type="project" value="UniProtKB-UniRule"/>
</dbReference>
<dbReference type="GO" id="GO:0052749">
    <property type="term" value="F:glucose-6-phosphate dehydrogenase (coenzyme F420) activity"/>
    <property type="evidence" value="ECO:0007669"/>
    <property type="project" value="UniProtKB-EC"/>
</dbReference>
<dbReference type="GO" id="GO:0016705">
    <property type="term" value="F:oxidoreductase activity, acting on paired donors, with incorporation or reduction of molecular oxygen"/>
    <property type="evidence" value="ECO:0007669"/>
    <property type="project" value="InterPro"/>
</dbReference>
<dbReference type="GO" id="GO:0005975">
    <property type="term" value="P:carbohydrate metabolic process"/>
    <property type="evidence" value="ECO:0007669"/>
    <property type="project" value="UniProtKB-UniRule"/>
</dbReference>
<dbReference type="CDD" id="cd01097">
    <property type="entry name" value="Tetrahydromethanopterin_reductase"/>
    <property type="match status" value="1"/>
</dbReference>
<dbReference type="Gene3D" id="3.20.20.30">
    <property type="entry name" value="Luciferase-like domain"/>
    <property type="match status" value="1"/>
</dbReference>
<dbReference type="HAMAP" id="MF_02123">
    <property type="entry name" value="F420_G6P_DH"/>
    <property type="match status" value="1"/>
</dbReference>
<dbReference type="InterPro" id="IPR019944">
    <property type="entry name" value="F420-dep_G6P_DH"/>
</dbReference>
<dbReference type="InterPro" id="IPR050564">
    <property type="entry name" value="F420-G6PD/mer"/>
</dbReference>
<dbReference type="InterPro" id="IPR019945">
    <property type="entry name" value="F420_G6P_DH-rel"/>
</dbReference>
<dbReference type="InterPro" id="IPR011251">
    <property type="entry name" value="Luciferase-like_dom"/>
</dbReference>
<dbReference type="InterPro" id="IPR036661">
    <property type="entry name" value="Luciferase-like_sf"/>
</dbReference>
<dbReference type="NCBIfam" id="TIGR03554">
    <property type="entry name" value="F420_G6P_DH"/>
    <property type="match status" value="1"/>
</dbReference>
<dbReference type="NCBIfam" id="TIGR03557">
    <property type="entry name" value="F420_G6P_family"/>
    <property type="match status" value="1"/>
</dbReference>
<dbReference type="PANTHER" id="PTHR43244">
    <property type="match status" value="1"/>
</dbReference>
<dbReference type="PANTHER" id="PTHR43244:SF1">
    <property type="entry name" value="5,10-METHYLENETETRAHYDROMETHANOPTERIN REDUCTASE"/>
    <property type="match status" value="1"/>
</dbReference>
<dbReference type="Pfam" id="PF00296">
    <property type="entry name" value="Bac_luciferase"/>
    <property type="match status" value="1"/>
</dbReference>
<dbReference type="SUPFAM" id="SSF51679">
    <property type="entry name" value="Bacterial luciferase-like"/>
    <property type="match status" value="1"/>
</dbReference>
<feature type="chain" id="PRO_0000413602" description="F420-dependent glucose-6-phosphate dehydrogenase 2">
    <location>
        <begin position="1"/>
        <end position="337"/>
    </location>
</feature>
<feature type="active site" description="Proton donor" evidence="1">
    <location>
        <position position="41"/>
    </location>
</feature>
<feature type="active site" description="Proton acceptor" evidence="1">
    <location>
        <position position="110"/>
    </location>
</feature>
<feature type="binding site" evidence="1">
    <location>
        <position position="40"/>
    </location>
    <ligand>
        <name>coenzyme F420-(gamma-Glu)n</name>
        <dbReference type="ChEBI" id="CHEBI:133980"/>
    </ligand>
</feature>
<feature type="binding site" evidence="1">
    <location>
        <position position="77"/>
    </location>
    <ligand>
        <name>coenzyme F420-(gamma-Glu)n</name>
        <dbReference type="ChEBI" id="CHEBI:133980"/>
    </ligand>
</feature>
<feature type="binding site" evidence="1">
    <location>
        <begin position="108"/>
        <end position="109"/>
    </location>
    <ligand>
        <name>coenzyme F420-(gamma-Glu)n</name>
        <dbReference type="ChEBI" id="CHEBI:133980"/>
    </ligand>
</feature>
<feature type="binding site" evidence="1">
    <location>
        <position position="113"/>
    </location>
    <ligand>
        <name>coenzyme F420-(gamma-Glu)n</name>
        <dbReference type="ChEBI" id="CHEBI:133980"/>
    </ligand>
</feature>
<feature type="binding site" evidence="1">
    <location>
        <begin position="178"/>
        <end position="179"/>
    </location>
    <ligand>
        <name>coenzyme F420-(gamma-Glu)n</name>
        <dbReference type="ChEBI" id="CHEBI:133980"/>
    </ligand>
</feature>
<feature type="binding site" evidence="1">
    <location>
        <begin position="181"/>
        <end position="182"/>
    </location>
    <ligand>
        <name>coenzyme F420-(gamma-Glu)n</name>
        <dbReference type="ChEBI" id="CHEBI:133980"/>
    </ligand>
</feature>
<feature type="binding site" evidence="1">
    <location>
        <position position="196"/>
    </location>
    <ligand>
        <name>substrate</name>
    </ligand>
</feature>
<feature type="binding site" evidence="1">
    <location>
        <position position="199"/>
    </location>
    <ligand>
        <name>substrate</name>
    </ligand>
</feature>
<feature type="binding site" evidence="1">
    <location>
        <position position="260"/>
    </location>
    <ligand>
        <name>substrate</name>
    </ligand>
</feature>
<feature type="binding site" evidence="1">
    <location>
        <position position="284"/>
    </location>
    <ligand>
        <name>substrate</name>
    </ligand>
</feature>
<geneLocation type="plasmid">
    <name>pRHL3</name>
</geneLocation>
<keyword id="KW-0119">Carbohydrate metabolism</keyword>
<keyword id="KW-0560">Oxidoreductase</keyword>
<keyword id="KW-0614">Plasmid</keyword>
<gene>
    <name evidence="1" type="primary">fgd2</name>
    <name type="ordered locus">RHA1_ro11166</name>
</gene>
<proteinExistence type="inferred from homology"/>
<evidence type="ECO:0000255" key="1">
    <source>
        <dbReference type="HAMAP-Rule" id="MF_02123"/>
    </source>
</evidence>
<organism>
    <name type="scientific">Rhodococcus jostii (strain RHA1)</name>
    <dbReference type="NCBI Taxonomy" id="101510"/>
    <lineage>
        <taxon>Bacteria</taxon>
        <taxon>Bacillati</taxon>
        <taxon>Actinomycetota</taxon>
        <taxon>Actinomycetes</taxon>
        <taxon>Mycobacteriales</taxon>
        <taxon>Nocardiaceae</taxon>
        <taxon>Rhodococcus</taxon>
    </lineage>
</organism>
<sequence length="337" mass="37281">MTQQLKLGYKASAEQFGPRELVELAVLAEKHGMDSATVSDHFQPWRHNGGHAPFSLSWMTAVGERTKRLQLGTSVLTPTFRYNPAVIAQAFATMGCLYPGRIMLGAGTGEALNEIATGYTGQWPEFRERYARLRESVQLMRDLWTGERTDFKGEYYSTTGASIYDVPECGIPVYIAAGGPVVARYAGRAGDGFICTSGKGMELYTDKLMPAVSEGATKAERDVTSIDKMIEIKISYDTDPEAALENTRFWAPLSLTQEQKHSIEDPIEMEAAADALPIEQVAKRWIVSSDPDDAVAQVKQYIDAGLNHLVFHAPGHDQKRFLELFDRDLAPRLRALG</sequence>
<accession>Q0RV73</accession>